<name>EX7L_AZOVD</name>
<feature type="chain" id="PRO_1000205667" description="Exodeoxyribonuclease 7 large subunit">
    <location>
        <begin position="1"/>
        <end position="456"/>
    </location>
</feature>
<comment type="function">
    <text evidence="1">Bidirectionally degrades single-stranded DNA into large acid-insoluble oligonucleotides, which are then degraded further into small acid-soluble oligonucleotides.</text>
</comment>
<comment type="catalytic activity">
    <reaction evidence="1">
        <text>Exonucleolytic cleavage in either 5'- to 3'- or 3'- to 5'-direction to yield nucleoside 5'-phosphates.</text>
        <dbReference type="EC" id="3.1.11.6"/>
    </reaction>
</comment>
<comment type="subunit">
    <text evidence="1">Heterooligomer composed of large and small subunits.</text>
</comment>
<comment type="subcellular location">
    <subcellularLocation>
        <location evidence="1">Cytoplasm</location>
    </subcellularLocation>
</comment>
<comment type="similarity">
    <text evidence="1">Belongs to the XseA family.</text>
</comment>
<accession>C1DE08</accession>
<evidence type="ECO:0000255" key="1">
    <source>
        <dbReference type="HAMAP-Rule" id="MF_00378"/>
    </source>
</evidence>
<sequence length="456" mass="50794">MLNDPFQRLGLDREILTVSQLNGRARALLEDVFAQVWVEGEISNLARPASGHLYFTLKDRQAQVRCALFRQNALRVREILRDGLAVRVRGRVSLYEGRGDFQLILDLLEPAGDGALRLAFEALKEKLAAEGLFAAERKRPLPAHPRSIGIVSSPTGAVIRDIVSVFRRRAPQVELTLVPTAVQGREAVAQIVHALELADRQGFDALILARGGGSLEDLWCFNEEVVARAVAACATPVVSAVGHETDVTIADFVADLRAPTPSAAAELLAPDSSDLQRRLDGLQRRLQLRMRHLLAARRLQLDGLSRRLRHPGERLQQQAQRLDDLELRLRRAMQRRLQGDAERLARLDTRLAAQHPERLLGLLRQRLEHLAERLPRAMRSTLRERRQRLEATAQTLQAVSPLATLGRGYAILLDERGRAIRAAVQAHPGQRLHARLAEGALELRVEAAFPSPPQPD</sequence>
<gene>
    <name evidence="1" type="primary">xseA</name>
    <name type="ordered locus">Avin_39770</name>
</gene>
<reference key="1">
    <citation type="journal article" date="2009" name="J. Bacteriol.">
        <title>Genome sequence of Azotobacter vinelandii, an obligate aerobe specialized to support diverse anaerobic metabolic processes.</title>
        <authorList>
            <person name="Setubal J.C."/>
            <person name="Dos Santos P."/>
            <person name="Goldman B.S."/>
            <person name="Ertesvaag H."/>
            <person name="Espin G."/>
            <person name="Rubio L.M."/>
            <person name="Valla S."/>
            <person name="Almeida N.F."/>
            <person name="Balasubramanian D."/>
            <person name="Cromes L."/>
            <person name="Curatti L."/>
            <person name="Du Z."/>
            <person name="Godsy E."/>
            <person name="Goodner B."/>
            <person name="Hellner-Burris K."/>
            <person name="Hernandez J.A."/>
            <person name="Houmiel K."/>
            <person name="Imperial J."/>
            <person name="Kennedy C."/>
            <person name="Larson T.J."/>
            <person name="Latreille P."/>
            <person name="Ligon L.S."/>
            <person name="Lu J."/>
            <person name="Maerk M."/>
            <person name="Miller N.M."/>
            <person name="Norton S."/>
            <person name="O'Carroll I.P."/>
            <person name="Paulsen I."/>
            <person name="Raulfs E.C."/>
            <person name="Roemer R."/>
            <person name="Rosser J."/>
            <person name="Segura D."/>
            <person name="Slater S."/>
            <person name="Stricklin S.L."/>
            <person name="Studholme D.J."/>
            <person name="Sun J."/>
            <person name="Viana C.J."/>
            <person name="Wallin E."/>
            <person name="Wang B."/>
            <person name="Wheeler C."/>
            <person name="Zhu H."/>
            <person name="Dean D.R."/>
            <person name="Dixon R."/>
            <person name="Wood D."/>
        </authorList>
    </citation>
    <scope>NUCLEOTIDE SEQUENCE [LARGE SCALE GENOMIC DNA]</scope>
    <source>
        <strain>DJ / ATCC BAA-1303</strain>
    </source>
</reference>
<dbReference type="EC" id="3.1.11.6" evidence="1"/>
<dbReference type="EMBL" id="CP001157">
    <property type="protein sequence ID" value="ACO80116.1"/>
    <property type="molecule type" value="Genomic_DNA"/>
</dbReference>
<dbReference type="RefSeq" id="WP_012702491.1">
    <property type="nucleotide sequence ID" value="NC_012560.1"/>
</dbReference>
<dbReference type="SMR" id="C1DE08"/>
<dbReference type="STRING" id="322710.Avin_39770"/>
<dbReference type="EnsemblBacteria" id="ACO80116">
    <property type="protein sequence ID" value="ACO80116"/>
    <property type="gene ID" value="Avin_39770"/>
</dbReference>
<dbReference type="GeneID" id="88186930"/>
<dbReference type="KEGG" id="avn:Avin_39770"/>
<dbReference type="eggNOG" id="COG1570">
    <property type="taxonomic scope" value="Bacteria"/>
</dbReference>
<dbReference type="HOGENOM" id="CLU_023625_3_1_6"/>
<dbReference type="OrthoDB" id="9802795at2"/>
<dbReference type="Proteomes" id="UP000002424">
    <property type="component" value="Chromosome"/>
</dbReference>
<dbReference type="GO" id="GO:0005737">
    <property type="term" value="C:cytoplasm"/>
    <property type="evidence" value="ECO:0007669"/>
    <property type="project" value="UniProtKB-SubCell"/>
</dbReference>
<dbReference type="GO" id="GO:0009318">
    <property type="term" value="C:exodeoxyribonuclease VII complex"/>
    <property type="evidence" value="ECO:0007669"/>
    <property type="project" value="InterPro"/>
</dbReference>
<dbReference type="GO" id="GO:0008855">
    <property type="term" value="F:exodeoxyribonuclease VII activity"/>
    <property type="evidence" value="ECO:0007669"/>
    <property type="project" value="UniProtKB-UniRule"/>
</dbReference>
<dbReference type="GO" id="GO:0003676">
    <property type="term" value="F:nucleic acid binding"/>
    <property type="evidence" value="ECO:0007669"/>
    <property type="project" value="InterPro"/>
</dbReference>
<dbReference type="GO" id="GO:0006308">
    <property type="term" value="P:DNA catabolic process"/>
    <property type="evidence" value="ECO:0007669"/>
    <property type="project" value="UniProtKB-UniRule"/>
</dbReference>
<dbReference type="CDD" id="cd04489">
    <property type="entry name" value="ExoVII_LU_OBF"/>
    <property type="match status" value="1"/>
</dbReference>
<dbReference type="HAMAP" id="MF_00378">
    <property type="entry name" value="Exonuc_7_L"/>
    <property type="match status" value="1"/>
</dbReference>
<dbReference type="InterPro" id="IPR003753">
    <property type="entry name" value="Exonuc_VII_L"/>
</dbReference>
<dbReference type="InterPro" id="IPR020579">
    <property type="entry name" value="Exonuc_VII_lsu_C"/>
</dbReference>
<dbReference type="InterPro" id="IPR025824">
    <property type="entry name" value="OB-fold_nuc-bd_dom"/>
</dbReference>
<dbReference type="NCBIfam" id="TIGR00237">
    <property type="entry name" value="xseA"/>
    <property type="match status" value="1"/>
</dbReference>
<dbReference type="PANTHER" id="PTHR30008">
    <property type="entry name" value="EXODEOXYRIBONUCLEASE 7 LARGE SUBUNIT"/>
    <property type="match status" value="1"/>
</dbReference>
<dbReference type="PANTHER" id="PTHR30008:SF0">
    <property type="entry name" value="EXODEOXYRIBONUCLEASE 7 LARGE SUBUNIT"/>
    <property type="match status" value="1"/>
</dbReference>
<dbReference type="Pfam" id="PF02601">
    <property type="entry name" value="Exonuc_VII_L"/>
    <property type="match status" value="1"/>
</dbReference>
<dbReference type="Pfam" id="PF13742">
    <property type="entry name" value="tRNA_anti_2"/>
    <property type="match status" value="1"/>
</dbReference>
<organism>
    <name type="scientific">Azotobacter vinelandii (strain DJ / ATCC BAA-1303)</name>
    <dbReference type="NCBI Taxonomy" id="322710"/>
    <lineage>
        <taxon>Bacteria</taxon>
        <taxon>Pseudomonadati</taxon>
        <taxon>Pseudomonadota</taxon>
        <taxon>Gammaproteobacteria</taxon>
        <taxon>Pseudomonadales</taxon>
        <taxon>Pseudomonadaceae</taxon>
        <taxon>Azotobacter</taxon>
    </lineage>
</organism>
<keyword id="KW-0963">Cytoplasm</keyword>
<keyword id="KW-0269">Exonuclease</keyword>
<keyword id="KW-0378">Hydrolase</keyword>
<keyword id="KW-0540">Nuclease</keyword>
<proteinExistence type="inferred from homology"/>
<protein>
    <recommendedName>
        <fullName evidence="1">Exodeoxyribonuclease 7 large subunit</fullName>
        <ecNumber evidence="1">3.1.11.6</ecNumber>
    </recommendedName>
    <alternativeName>
        <fullName evidence="1">Exodeoxyribonuclease VII large subunit</fullName>
        <shortName evidence="1">Exonuclease VII large subunit</shortName>
    </alternativeName>
</protein>